<protein>
    <recommendedName>
        <fullName>NADH-ubiquinone oxidoreductase chain 4L</fullName>
        <ecNumber>7.1.1.2</ecNumber>
    </recommendedName>
    <alternativeName>
        <fullName>NADH dehydrogenase subunit 4L</fullName>
    </alternativeName>
</protein>
<dbReference type="EC" id="7.1.1.2"/>
<dbReference type="EMBL" id="GU295658">
    <property type="protein sequence ID" value="ADB07178.1"/>
    <property type="molecule type" value="Genomic_DNA"/>
</dbReference>
<dbReference type="EMBL" id="GU068049">
    <property type="protein sequence ID" value="ACY01505.1"/>
    <property type="molecule type" value="Genomic_DNA"/>
</dbReference>
<dbReference type="EMBL" id="GU229278">
    <property type="protein sequence ID" value="ACZ61138.1"/>
    <property type="molecule type" value="Genomic_DNA"/>
</dbReference>
<dbReference type="EMBL" id="GU229279">
    <property type="protein sequence ID" value="ACZ61151.1"/>
    <property type="molecule type" value="Genomic_DNA"/>
</dbReference>
<dbReference type="EMBL" id="GU229280">
    <property type="protein sequence ID" value="ACZ61164.1"/>
    <property type="molecule type" value="Genomic_DNA"/>
</dbReference>
<dbReference type="RefSeq" id="YP_004111304.1">
    <property type="nucleotide sequence ID" value="NC_005044.2"/>
</dbReference>
<dbReference type="SMR" id="Q7YBC1"/>
<dbReference type="STRING" id="9925.ENSCHIP00000000009"/>
<dbReference type="Ensembl" id="ENSCHIT00000000027.1">
    <property type="protein sequence ID" value="ENSCHIP00000000009.1"/>
    <property type="gene ID" value="ENSCHIG00000000027.1"/>
</dbReference>
<dbReference type="Ensembl" id="ENSCHIT00020000028">
    <property type="protein sequence ID" value="ENSCHIP00020000010"/>
    <property type="gene ID" value="ENSCHIG00020000028"/>
</dbReference>
<dbReference type="Ensembl" id="ENSCHIT00040000028">
    <property type="protein sequence ID" value="ENSCHIP00040000010"/>
    <property type="gene ID" value="ENSCHIG00040000028"/>
</dbReference>
<dbReference type="GeneID" id="1485864"/>
<dbReference type="KEGG" id="chx:1485864"/>
<dbReference type="CTD" id="4539"/>
<dbReference type="GeneTree" id="ENSGT00390000004755"/>
<dbReference type="OMA" id="MYRSHLM"/>
<dbReference type="OrthoDB" id="6146597at2759"/>
<dbReference type="Proteomes" id="UP000291000">
    <property type="component" value="Unassembled WGS sequence"/>
</dbReference>
<dbReference type="Proteomes" id="UP000694566">
    <property type="component" value="Unplaced"/>
</dbReference>
<dbReference type="Bgee" id="ENSCHIG00000000027">
    <property type="expression patterns" value="Expressed in prefrontal cortex and 17 other cell types or tissues"/>
</dbReference>
<dbReference type="GO" id="GO:0005743">
    <property type="term" value="C:mitochondrial inner membrane"/>
    <property type="evidence" value="ECO:0000250"/>
    <property type="project" value="UniProtKB"/>
</dbReference>
<dbReference type="GO" id="GO:0045271">
    <property type="term" value="C:respiratory chain complex I"/>
    <property type="evidence" value="ECO:0000250"/>
    <property type="project" value="UniProtKB"/>
</dbReference>
<dbReference type="GO" id="GO:0008137">
    <property type="term" value="F:NADH dehydrogenase (ubiquinone) activity"/>
    <property type="evidence" value="ECO:0000250"/>
    <property type="project" value="UniProtKB"/>
</dbReference>
<dbReference type="GO" id="GO:0042773">
    <property type="term" value="P:ATP synthesis coupled electron transport"/>
    <property type="evidence" value="ECO:0007669"/>
    <property type="project" value="InterPro"/>
</dbReference>
<dbReference type="FunFam" id="1.10.287.3510:FF:000002">
    <property type="entry name" value="NADH-ubiquinone oxidoreductase chain 4L"/>
    <property type="match status" value="1"/>
</dbReference>
<dbReference type="Gene3D" id="1.10.287.3510">
    <property type="match status" value="1"/>
</dbReference>
<dbReference type="InterPro" id="IPR001133">
    <property type="entry name" value="NADH_UbQ_OxRdtase_chain4L/K"/>
</dbReference>
<dbReference type="InterPro" id="IPR039428">
    <property type="entry name" value="NUOK/Mnh_C1-like"/>
</dbReference>
<dbReference type="PANTHER" id="PTHR11434:SF0">
    <property type="entry name" value="NADH-UBIQUINONE OXIDOREDUCTASE CHAIN 4L"/>
    <property type="match status" value="1"/>
</dbReference>
<dbReference type="PANTHER" id="PTHR11434">
    <property type="entry name" value="NADH-UBIQUINONE OXIDOREDUCTASE SUBUNIT ND4L"/>
    <property type="match status" value="1"/>
</dbReference>
<dbReference type="Pfam" id="PF00420">
    <property type="entry name" value="Oxidored_q2"/>
    <property type="match status" value="1"/>
</dbReference>
<gene>
    <name type="primary">MT-ND4L</name>
    <name type="synonym">MTND4L</name>
    <name type="synonym">NADH4L</name>
    <name type="synonym">ND4L</name>
</gene>
<comment type="function">
    <text evidence="1">Core subunit of the mitochondrial membrane respiratory chain NADH dehydrogenase (Complex I) which catalyzes electron transfer from NADH through the respiratory chain, using ubiquinone as an electron acceptor. Part of the enzyme membrane arm which is embedded in the lipid bilayer and involved in proton translocation.</text>
</comment>
<comment type="catalytic activity">
    <reaction evidence="1">
        <text>a ubiquinone + NADH + 5 H(+)(in) = a ubiquinol + NAD(+) + 4 H(+)(out)</text>
        <dbReference type="Rhea" id="RHEA:29091"/>
        <dbReference type="Rhea" id="RHEA-COMP:9565"/>
        <dbReference type="Rhea" id="RHEA-COMP:9566"/>
        <dbReference type="ChEBI" id="CHEBI:15378"/>
        <dbReference type="ChEBI" id="CHEBI:16389"/>
        <dbReference type="ChEBI" id="CHEBI:17976"/>
        <dbReference type="ChEBI" id="CHEBI:57540"/>
        <dbReference type="ChEBI" id="CHEBI:57945"/>
        <dbReference type="EC" id="7.1.1.2"/>
    </reaction>
    <physiologicalReaction direction="left-to-right" evidence="1">
        <dbReference type="Rhea" id="RHEA:29092"/>
    </physiologicalReaction>
</comment>
<comment type="subunit">
    <text evidence="2">Core subunit of respiratory chain NADH dehydrogenase (Complex I) which is composed of 45 different subunits.</text>
</comment>
<comment type="subcellular location">
    <subcellularLocation>
        <location evidence="2">Mitochondrion inner membrane</location>
        <topology evidence="3">Multi-pass membrane protein</topology>
    </subcellularLocation>
</comment>
<comment type="similarity">
    <text evidence="4">Belongs to the complex I subunit 4L family.</text>
</comment>
<keyword id="KW-0249">Electron transport</keyword>
<keyword id="KW-0472">Membrane</keyword>
<keyword id="KW-0496">Mitochondrion</keyword>
<keyword id="KW-0999">Mitochondrion inner membrane</keyword>
<keyword id="KW-0520">NAD</keyword>
<keyword id="KW-1185">Reference proteome</keyword>
<keyword id="KW-0679">Respiratory chain</keyword>
<keyword id="KW-1278">Translocase</keyword>
<keyword id="KW-0812">Transmembrane</keyword>
<keyword id="KW-1133">Transmembrane helix</keyword>
<keyword id="KW-0813">Transport</keyword>
<keyword id="KW-0830">Ubiquinone</keyword>
<organism>
    <name type="scientific">Capra hircus</name>
    <name type="common">Goat</name>
    <dbReference type="NCBI Taxonomy" id="9925"/>
    <lineage>
        <taxon>Eukaryota</taxon>
        <taxon>Metazoa</taxon>
        <taxon>Chordata</taxon>
        <taxon>Craniata</taxon>
        <taxon>Vertebrata</taxon>
        <taxon>Euteleostomi</taxon>
        <taxon>Mammalia</taxon>
        <taxon>Eutheria</taxon>
        <taxon>Laurasiatheria</taxon>
        <taxon>Artiodactyla</taxon>
        <taxon>Ruminantia</taxon>
        <taxon>Pecora</taxon>
        <taxon>Bovidae</taxon>
        <taxon>Caprinae</taxon>
        <taxon>Capra</taxon>
    </lineage>
</organism>
<evidence type="ECO:0000250" key="1">
    <source>
        <dbReference type="UniProtKB" id="P03901"/>
    </source>
</evidence>
<evidence type="ECO:0000250" key="2">
    <source>
        <dbReference type="UniProtKB" id="P03902"/>
    </source>
</evidence>
<evidence type="ECO:0000255" key="3"/>
<evidence type="ECO:0000305" key="4"/>
<accession>Q7YBC1</accession>
<accession>D0VEG2</accession>
<geneLocation type="mitochondrion"/>
<sequence>MSLVYMNIMTAFAVSLTGLLMYRSHLMSSLLCLEGMMLSLFIMATLMILNSHFTLASMMPIILLVFAACEAALGLSLLVMVSNTYGTDYVQNLNLLQC</sequence>
<proteinExistence type="inferred from homology"/>
<reference key="1">
    <citation type="journal article" date="2010" name="Mitochondrial DNA">
        <title>Comparisons between mitochondrial genomes of domestic goat (Capra hircus) reveal the presence of numts and multiple sequencing errors.</title>
        <authorList>
            <person name="Hassanin A."/>
            <person name="Bonillo C."/>
            <person name="Nguyen B.X."/>
            <person name="Cruaud C."/>
        </authorList>
    </citation>
    <scope>NUCLEOTIDE SEQUENCE [GENOMIC DNA]</scope>
    <source>
        <strain>De Co</strain>
    </source>
</reference>
<reference key="2">
    <citation type="submission" date="2009-10" db="EMBL/GenBank/DDBJ databases">
        <title>Characterization of mitochondrial cyt b-like numt sequence in Inner Mongolia white cashmere goat.</title>
        <authorList>
            <person name="Xi W.H."/>
            <person name="Zhang W.G."/>
            <person name="Li J.Q."/>
            <person name="Wu J.H."/>
            <person name="Zhang Y.J."/>
            <person name="Feng L."/>
        </authorList>
    </citation>
    <scope>NUCLEOTIDE SEQUENCE [GENOMIC DNA]</scope>
    <source>
        <strain>Inner Mongolia White Cashmere</strain>
    </source>
</reference>
<reference key="3">
    <citation type="submission" date="2009-11" db="EMBL/GenBank/DDBJ databases">
        <authorList>
            <person name="Wu Y.P."/>
            <person name="Ma Y.H."/>
        </authorList>
    </citation>
    <scope>NUCLEOTIDE SEQUENCE [GENOMIC DNA]</scope>
    <source>
        <strain>A-MG25</strain>
        <strain>B-LK31</strain>
        <strain>C-WZ37</strain>
    </source>
</reference>
<feature type="chain" id="PRO_0000274986" description="NADH-ubiquinone oxidoreductase chain 4L">
    <location>
        <begin position="1"/>
        <end position="98"/>
    </location>
</feature>
<feature type="transmembrane region" description="Helical" evidence="3">
    <location>
        <begin position="1"/>
        <end position="21"/>
    </location>
</feature>
<feature type="transmembrane region" description="Helical" evidence="3">
    <location>
        <begin position="29"/>
        <end position="49"/>
    </location>
</feature>
<feature type="transmembrane region" description="Helical" evidence="3">
    <location>
        <begin position="61"/>
        <end position="81"/>
    </location>
</feature>
<name>NU4LM_CAPHI</name>